<accession>Q3Z262</accession>
<proteinExistence type="inferred from homology"/>
<comment type="catalytic activity">
    <reaction evidence="1">
        <text>tRNA(Phe) + L-phenylalanine + ATP = L-phenylalanyl-tRNA(Phe) + AMP + diphosphate + H(+)</text>
        <dbReference type="Rhea" id="RHEA:19413"/>
        <dbReference type="Rhea" id="RHEA-COMP:9668"/>
        <dbReference type="Rhea" id="RHEA-COMP:9699"/>
        <dbReference type="ChEBI" id="CHEBI:15378"/>
        <dbReference type="ChEBI" id="CHEBI:30616"/>
        <dbReference type="ChEBI" id="CHEBI:33019"/>
        <dbReference type="ChEBI" id="CHEBI:58095"/>
        <dbReference type="ChEBI" id="CHEBI:78442"/>
        <dbReference type="ChEBI" id="CHEBI:78531"/>
        <dbReference type="ChEBI" id="CHEBI:456215"/>
        <dbReference type="EC" id="6.1.1.20"/>
    </reaction>
</comment>
<comment type="cofactor">
    <cofactor evidence="1">
        <name>Mg(2+)</name>
        <dbReference type="ChEBI" id="CHEBI:18420"/>
    </cofactor>
    <text evidence="1">Binds 2 magnesium ions per tetramer.</text>
</comment>
<comment type="subunit">
    <text evidence="1">Tetramer of two alpha and two beta subunits.</text>
</comment>
<comment type="subcellular location">
    <subcellularLocation>
        <location evidence="1">Cytoplasm</location>
    </subcellularLocation>
</comment>
<comment type="similarity">
    <text evidence="1">Belongs to the class-II aminoacyl-tRNA synthetase family. Phe-tRNA synthetase alpha subunit type 1 subfamily.</text>
</comment>
<keyword id="KW-0030">Aminoacyl-tRNA synthetase</keyword>
<keyword id="KW-0067">ATP-binding</keyword>
<keyword id="KW-0963">Cytoplasm</keyword>
<keyword id="KW-0436">Ligase</keyword>
<keyword id="KW-0460">Magnesium</keyword>
<keyword id="KW-0479">Metal-binding</keyword>
<keyword id="KW-0547">Nucleotide-binding</keyword>
<keyword id="KW-0648">Protein biosynthesis</keyword>
<keyword id="KW-1185">Reference proteome</keyword>
<feature type="chain" id="PRO_0000232025" description="Phenylalanine--tRNA ligase alpha subunit">
    <location>
        <begin position="1"/>
        <end position="327"/>
    </location>
</feature>
<feature type="binding site" evidence="1">
    <location>
        <position position="252"/>
    </location>
    <ligand>
        <name>Mg(2+)</name>
        <dbReference type="ChEBI" id="CHEBI:18420"/>
        <note>shared with beta subunit</note>
    </ligand>
</feature>
<protein>
    <recommendedName>
        <fullName evidence="1">Phenylalanine--tRNA ligase alpha subunit</fullName>
        <ecNumber evidence="1">6.1.1.20</ecNumber>
    </recommendedName>
    <alternativeName>
        <fullName evidence="1">Phenylalanyl-tRNA synthetase alpha subunit</fullName>
        <shortName evidence="1">PheRS</shortName>
    </alternativeName>
</protein>
<dbReference type="EC" id="6.1.1.20" evidence="1"/>
<dbReference type="EMBL" id="CP000038">
    <property type="protein sequence ID" value="AAZ88150.1"/>
    <property type="molecule type" value="Genomic_DNA"/>
</dbReference>
<dbReference type="RefSeq" id="WP_000018582.1">
    <property type="nucleotide sequence ID" value="NC_007384.1"/>
</dbReference>
<dbReference type="SMR" id="Q3Z262"/>
<dbReference type="GeneID" id="93775927"/>
<dbReference type="KEGG" id="ssn:SSON_1444"/>
<dbReference type="HOGENOM" id="CLU_025086_0_1_6"/>
<dbReference type="Proteomes" id="UP000002529">
    <property type="component" value="Chromosome"/>
</dbReference>
<dbReference type="GO" id="GO:0005737">
    <property type="term" value="C:cytoplasm"/>
    <property type="evidence" value="ECO:0007669"/>
    <property type="project" value="UniProtKB-SubCell"/>
</dbReference>
<dbReference type="GO" id="GO:0005524">
    <property type="term" value="F:ATP binding"/>
    <property type="evidence" value="ECO:0007669"/>
    <property type="project" value="UniProtKB-UniRule"/>
</dbReference>
<dbReference type="GO" id="GO:0000287">
    <property type="term" value="F:magnesium ion binding"/>
    <property type="evidence" value="ECO:0007669"/>
    <property type="project" value="UniProtKB-UniRule"/>
</dbReference>
<dbReference type="GO" id="GO:0004826">
    <property type="term" value="F:phenylalanine-tRNA ligase activity"/>
    <property type="evidence" value="ECO:0007669"/>
    <property type="project" value="UniProtKB-UniRule"/>
</dbReference>
<dbReference type="GO" id="GO:0000049">
    <property type="term" value="F:tRNA binding"/>
    <property type="evidence" value="ECO:0007669"/>
    <property type="project" value="InterPro"/>
</dbReference>
<dbReference type="GO" id="GO:0006432">
    <property type="term" value="P:phenylalanyl-tRNA aminoacylation"/>
    <property type="evidence" value="ECO:0007669"/>
    <property type="project" value="UniProtKB-UniRule"/>
</dbReference>
<dbReference type="CDD" id="cd00496">
    <property type="entry name" value="PheRS_alpha_core"/>
    <property type="match status" value="1"/>
</dbReference>
<dbReference type="FunFam" id="3.30.930.10:FF:000003">
    <property type="entry name" value="Phenylalanine--tRNA ligase alpha subunit"/>
    <property type="match status" value="1"/>
</dbReference>
<dbReference type="Gene3D" id="3.30.930.10">
    <property type="entry name" value="Bira Bifunctional Protein, Domain 2"/>
    <property type="match status" value="1"/>
</dbReference>
<dbReference type="HAMAP" id="MF_00281">
    <property type="entry name" value="Phe_tRNA_synth_alpha1"/>
    <property type="match status" value="1"/>
</dbReference>
<dbReference type="InterPro" id="IPR006195">
    <property type="entry name" value="aa-tRNA-synth_II"/>
</dbReference>
<dbReference type="InterPro" id="IPR045864">
    <property type="entry name" value="aa-tRNA-synth_II/BPL/LPL"/>
</dbReference>
<dbReference type="InterPro" id="IPR004529">
    <property type="entry name" value="Phe-tRNA-synth_IIc_asu"/>
</dbReference>
<dbReference type="InterPro" id="IPR004188">
    <property type="entry name" value="Phe-tRNA_ligase_II_N"/>
</dbReference>
<dbReference type="InterPro" id="IPR022911">
    <property type="entry name" value="Phe_tRNA_ligase_alpha1_bac"/>
</dbReference>
<dbReference type="InterPro" id="IPR002319">
    <property type="entry name" value="Phenylalanyl-tRNA_Synthase"/>
</dbReference>
<dbReference type="InterPro" id="IPR010978">
    <property type="entry name" value="tRNA-bd_arm"/>
</dbReference>
<dbReference type="NCBIfam" id="TIGR00468">
    <property type="entry name" value="pheS"/>
    <property type="match status" value="1"/>
</dbReference>
<dbReference type="PANTHER" id="PTHR11538:SF41">
    <property type="entry name" value="PHENYLALANINE--TRNA LIGASE, MITOCHONDRIAL"/>
    <property type="match status" value="1"/>
</dbReference>
<dbReference type="PANTHER" id="PTHR11538">
    <property type="entry name" value="PHENYLALANYL-TRNA SYNTHETASE"/>
    <property type="match status" value="1"/>
</dbReference>
<dbReference type="Pfam" id="PF02912">
    <property type="entry name" value="Phe_tRNA-synt_N"/>
    <property type="match status" value="1"/>
</dbReference>
<dbReference type="Pfam" id="PF01409">
    <property type="entry name" value="tRNA-synt_2d"/>
    <property type="match status" value="1"/>
</dbReference>
<dbReference type="SUPFAM" id="SSF55681">
    <property type="entry name" value="Class II aaRS and biotin synthetases"/>
    <property type="match status" value="1"/>
</dbReference>
<dbReference type="SUPFAM" id="SSF46589">
    <property type="entry name" value="tRNA-binding arm"/>
    <property type="match status" value="1"/>
</dbReference>
<dbReference type="PROSITE" id="PS50862">
    <property type="entry name" value="AA_TRNA_LIGASE_II"/>
    <property type="match status" value="1"/>
</dbReference>
<gene>
    <name evidence="1" type="primary">pheS</name>
    <name type="ordered locus">SSON_1444</name>
</gene>
<name>SYFA_SHISS</name>
<organism>
    <name type="scientific">Shigella sonnei (strain Ss046)</name>
    <dbReference type="NCBI Taxonomy" id="300269"/>
    <lineage>
        <taxon>Bacteria</taxon>
        <taxon>Pseudomonadati</taxon>
        <taxon>Pseudomonadota</taxon>
        <taxon>Gammaproteobacteria</taxon>
        <taxon>Enterobacterales</taxon>
        <taxon>Enterobacteriaceae</taxon>
        <taxon>Shigella</taxon>
    </lineage>
</organism>
<evidence type="ECO:0000255" key="1">
    <source>
        <dbReference type="HAMAP-Rule" id="MF_00281"/>
    </source>
</evidence>
<sequence>MSHLAELVASAKAAISQASDVAALDNVRVEYLGKKGHLTLQMTTLRELPPEERPAAGAVINEAKEQVQQALNARKAELESAALNARLAAETIDVSLLGRRIENGGLHPVTRTIDRIESFFGELGFTVATGPEIEDDYHNFDALNIPGHHPARADHDTFWFDTTRLLRTQTSGVQIRTMKAQQPPIRIIAPGRVYRNDYDQTHTPMFHQMEGLIVDTNISFTNLKGTLHDFLRNFFEEDLQIRFRPSYFPFTEPSAEVDVMGKNGKWLEVLGCGMVHPNVLRNVGIDPEVYSGFAFGMGMERLTMLRYGVTDLRSFFENDLRFLKQFK</sequence>
<reference key="1">
    <citation type="journal article" date="2005" name="Nucleic Acids Res.">
        <title>Genome dynamics and diversity of Shigella species, the etiologic agents of bacillary dysentery.</title>
        <authorList>
            <person name="Yang F."/>
            <person name="Yang J."/>
            <person name="Zhang X."/>
            <person name="Chen L."/>
            <person name="Jiang Y."/>
            <person name="Yan Y."/>
            <person name="Tang X."/>
            <person name="Wang J."/>
            <person name="Xiong Z."/>
            <person name="Dong J."/>
            <person name="Xue Y."/>
            <person name="Zhu Y."/>
            <person name="Xu X."/>
            <person name="Sun L."/>
            <person name="Chen S."/>
            <person name="Nie H."/>
            <person name="Peng J."/>
            <person name="Xu J."/>
            <person name="Wang Y."/>
            <person name="Yuan Z."/>
            <person name="Wen Y."/>
            <person name="Yao Z."/>
            <person name="Shen Y."/>
            <person name="Qiang B."/>
            <person name="Hou Y."/>
            <person name="Yu J."/>
            <person name="Jin Q."/>
        </authorList>
    </citation>
    <scope>NUCLEOTIDE SEQUENCE [LARGE SCALE GENOMIC DNA]</scope>
    <source>
        <strain>Ss046</strain>
    </source>
</reference>